<dbReference type="EC" id="2.7.1.107" evidence="2"/>
<dbReference type="EMBL" id="AC114574">
    <property type="status" value="NOT_ANNOTATED_CDS"/>
    <property type="molecule type" value="Genomic_DNA"/>
</dbReference>
<dbReference type="EMBL" id="AC154019">
    <property type="status" value="NOT_ANNOTATED_CDS"/>
    <property type="molecule type" value="Genomic_DNA"/>
</dbReference>
<dbReference type="EMBL" id="AC159480">
    <property type="status" value="NOT_ANNOTATED_CDS"/>
    <property type="molecule type" value="Genomic_DNA"/>
</dbReference>
<dbReference type="EMBL" id="AC184160">
    <property type="status" value="NOT_ANNOTATED_CDS"/>
    <property type="molecule type" value="Genomic_DNA"/>
</dbReference>
<dbReference type="EMBL" id="AC185507">
    <property type="status" value="NOT_ANNOTATED_CDS"/>
    <property type="molecule type" value="Genomic_DNA"/>
</dbReference>
<dbReference type="CCDS" id="CCDS39459.1">
    <molecule id="D3YWQ0-1"/>
</dbReference>
<dbReference type="CCDS" id="CCDS85032.1">
    <molecule id="D3YWQ0-2"/>
</dbReference>
<dbReference type="RefSeq" id="NP_001074675.1">
    <molecule id="D3YWQ0-1"/>
    <property type="nucleotide sequence ID" value="NM_001081206.2"/>
</dbReference>
<dbReference type="RefSeq" id="NP_001334033.1">
    <molecule id="D3YWQ0-2"/>
    <property type="nucleotide sequence ID" value="NM_001347104.2"/>
</dbReference>
<dbReference type="SMR" id="D3YWQ0"/>
<dbReference type="FunCoup" id="D3YWQ0">
    <property type="interactions" value="885"/>
</dbReference>
<dbReference type="IntAct" id="D3YWQ0">
    <property type="interactions" value="1"/>
</dbReference>
<dbReference type="STRING" id="10090.ENSMUSP00000099071"/>
<dbReference type="iPTMnet" id="D3YWQ0"/>
<dbReference type="PhosphoSitePlus" id="D3YWQ0"/>
<dbReference type="SwissPalm" id="D3YWQ0"/>
<dbReference type="PaxDb" id="10090-ENSMUSP00000099071"/>
<dbReference type="PeptideAtlas" id="D3YWQ0"/>
<dbReference type="ProteomicsDB" id="350765"/>
<dbReference type="ProteomicsDB" id="361049">
    <molecule id="D3YWQ0-1"/>
</dbReference>
<dbReference type="Antibodypedia" id="32299">
    <property type="antibodies" value="187 antibodies from 29 providers"/>
</dbReference>
<dbReference type="DNASU" id="320127"/>
<dbReference type="Ensembl" id="ENSMUST00000090314.11">
    <molecule id="D3YWQ0-2"/>
    <property type="protein sequence ID" value="ENSMUSP00000087788.5"/>
    <property type="gene ID" value="ENSMUSG00000038665.16"/>
</dbReference>
<dbReference type="Ensembl" id="ENSMUST00000101532.10">
    <molecule id="D3YWQ0-1"/>
    <property type="protein sequence ID" value="ENSMUSP00000099071.4"/>
    <property type="gene ID" value="ENSMUSG00000038665.16"/>
</dbReference>
<dbReference type="GeneID" id="320127"/>
<dbReference type="KEGG" id="mmu:320127"/>
<dbReference type="UCSC" id="uc009bjb.1">
    <molecule id="D3YWQ0-2"/>
    <property type="organism name" value="mouse"/>
</dbReference>
<dbReference type="AGR" id="MGI:2443430"/>
<dbReference type="CTD" id="9162"/>
<dbReference type="MGI" id="MGI:2443430">
    <property type="gene designation" value="Dgki"/>
</dbReference>
<dbReference type="VEuPathDB" id="HostDB:ENSMUSG00000038665"/>
<dbReference type="eggNOG" id="KOG0782">
    <property type="taxonomic scope" value="Eukaryota"/>
</dbReference>
<dbReference type="GeneTree" id="ENSGT00940000158094"/>
<dbReference type="InParanoid" id="D3YWQ0"/>
<dbReference type="OMA" id="XIPLGIL"/>
<dbReference type="OrthoDB" id="242257at2759"/>
<dbReference type="PhylomeDB" id="D3YWQ0"/>
<dbReference type="TreeFam" id="TF312817"/>
<dbReference type="Reactome" id="R-MMU-114508">
    <property type="pathway name" value="Effects of PIP2 hydrolysis"/>
</dbReference>
<dbReference type="UniPathway" id="UPA00230"/>
<dbReference type="BioGRID-ORCS" id="320127">
    <property type="hits" value="6 hits in 82 CRISPR screens"/>
</dbReference>
<dbReference type="CD-CODE" id="CE726F99">
    <property type="entry name" value="Postsynaptic density"/>
</dbReference>
<dbReference type="ChiTaRS" id="Dgki">
    <property type="organism name" value="mouse"/>
</dbReference>
<dbReference type="PRO" id="PR:D3YWQ0"/>
<dbReference type="Proteomes" id="UP000000589">
    <property type="component" value="Chromosome 6"/>
</dbReference>
<dbReference type="RNAct" id="D3YWQ0">
    <property type="molecule type" value="protein"/>
</dbReference>
<dbReference type="Bgee" id="ENSMUSG00000038665">
    <property type="expression patterns" value="Expressed in lumbar dorsal root ganglion and 56 other cell types or tissues"/>
</dbReference>
<dbReference type="ExpressionAtlas" id="D3YWQ0">
    <property type="expression patterns" value="baseline and differential"/>
</dbReference>
<dbReference type="GO" id="GO:0043679">
    <property type="term" value="C:axon terminus"/>
    <property type="evidence" value="ECO:0000266"/>
    <property type="project" value="MGI"/>
</dbReference>
<dbReference type="GO" id="GO:0005737">
    <property type="term" value="C:cytoplasm"/>
    <property type="evidence" value="ECO:0000314"/>
    <property type="project" value="MGI"/>
</dbReference>
<dbReference type="GO" id="GO:0005829">
    <property type="term" value="C:cytosol"/>
    <property type="evidence" value="ECO:0000266"/>
    <property type="project" value="MGI"/>
</dbReference>
<dbReference type="GO" id="GO:0043197">
    <property type="term" value="C:dendritic spine"/>
    <property type="evidence" value="ECO:0000266"/>
    <property type="project" value="MGI"/>
</dbReference>
<dbReference type="GO" id="GO:0060076">
    <property type="term" value="C:excitatory synapse"/>
    <property type="evidence" value="ECO:0000266"/>
    <property type="project" value="MGI"/>
</dbReference>
<dbReference type="GO" id="GO:0098978">
    <property type="term" value="C:glutamatergic synapse"/>
    <property type="evidence" value="ECO:0000314"/>
    <property type="project" value="SynGO"/>
</dbReference>
<dbReference type="GO" id="GO:0032045">
    <property type="term" value="C:guanyl-nucleotide exchange factor complex"/>
    <property type="evidence" value="ECO:0000314"/>
    <property type="project" value="MGI"/>
</dbReference>
<dbReference type="GO" id="GO:0043025">
    <property type="term" value="C:neuronal cell body"/>
    <property type="evidence" value="ECO:0000266"/>
    <property type="project" value="MGI"/>
</dbReference>
<dbReference type="GO" id="GO:0005634">
    <property type="term" value="C:nucleus"/>
    <property type="evidence" value="ECO:0007669"/>
    <property type="project" value="UniProtKB-SubCell"/>
</dbReference>
<dbReference type="GO" id="GO:0048471">
    <property type="term" value="C:perinuclear region of cytoplasm"/>
    <property type="evidence" value="ECO:0000314"/>
    <property type="project" value="MGI"/>
</dbReference>
<dbReference type="GO" id="GO:0014069">
    <property type="term" value="C:postsynaptic density"/>
    <property type="evidence" value="ECO:0000266"/>
    <property type="project" value="MGI"/>
</dbReference>
<dbReference type="GO" id="GO:0048786">
    <property type="term" value="C:presynaptic active zone"/>
    <property type="evidence" value="ECO:0000266"/>
    <property type="project" value="MGI"/>
</dbReference>
<dbReference type="GO" id="GO:0032991">
    <property type="term" value="C:protein-containing complex"/>
    <property type="evidence" value="ECO:0000266"/>
    <property type="project" value="MGI"/>
</dbReference>
<dbReference type="GO" id="GO:0098685">
    <property type="term" value="C:Schaffer collateral - CA1 synapse"/>
    <property type="evidence" value="ECO:0000314"/>
    <property type="project" value="SynGO"/>
</dbReference>
<dbReference type="GO" id="GO:0045202">
    <property type="term" value="C:synapse"/>
    <property type="evidence" value="ECO:0000266"/>
    <property type="project" value="MGI"/>
</dbReference>
<dbReference type="GO" id="GO:0097060">
    <property type="term" value="C:synaptic membrane"/>
    <property type="evidence" value="ECO:0000266"/>
    <property type="project" value="MGI"/>
</dbReference>
<dbReference type="GO" id="GO:0008021">
    <property type="term" value="C:synaptic vesicle"/>
    <property type="evidence" value="ECO:0000266"/>
    <property type="project" value="MGI"/>
</dbReference>
<dbReference type="GO" id="GO:0030672">
    <property type="term" value="C:synaptic vesicle membrane"/>
    <property type="evidence" value="ECO:0007669"/>
    <property type="project" value="UniProtKB-SubCell"/>
</dbReference>
<dbReference type="GO" id="GO:0005524">
    <property type="term" value="F:ATP binding"/>
    <property type="evidence" value="ECO:0007669"/>
    <property type="project" value="UniProtKB-KW"/>
</dbReference>
<dbReference type="GO" id="GO:0004143">
    <property type="term" value="F:ATP-dependent diacylglycerol kinase activity"/>
    <property type="evidence" value="ECO:0000314"/>
    <property type="project" value="MGI"/>
</dbReference>
<dbReference type="GO" id="GO:0005095">
    <property type="term" value="F:GTPase inhibitor activity"/>
    <property type="evidence" value="ECO:0000314"/>
    <property type="project" value="MGI"/>
</dbReference>
<dbReference type="GO" id="GO:0031267">
    <property type="term" value="F:small GTPase binding"/>
    <property type="evidence" value="ECO:0000353"/>
    <property type="project" value="MGI"/>
</dbReference>
<dbReference type="GO" id="GO:0060079">
    <property type="term" value="P:excitatory postsynaptic potential"/>
    <property type="evidence" value="ECO:0000315"/>
    <property type="project" value="MGI"/>
</dbReference>
<dbReference type="GO" id="GO:0046486">
    <property type="term" value="P:glycerolipid metabolic process"/>
    <property type="evidence" value="ECO:0007669"/>
    <property type="project" value="UniProtKB-UniPathway"/>
</dbReference>
<dbReference type="GO" id="GO:0046959">
    <property type="term" value="P:habituation"/>
    <property type="evidence" value="ECO:0000315"/>
    <property type="project" value="MGI"/>
</dbReference>
<dbReference type="GO" id="GO:0007269">
    <property type="term" value="P:neurotransmitter secretion"/>
    <property type="evidence" value="ECO:0000315"/>
    <property type="project" value="MGI"/>
</dbReference>
<dbReference type="GO" id="GO:0007200">
    <property type="term" value="P:phospholipase C-activating G protein-coupled receptor signaling pathway"/>
    <property type="evidence" value="ECO:0007669"/>
    <property type="project" value="InterPro"/>
</dbReference>
<dbReference type="GO" id="GO:0046579">
    <property type="term" value="P:positive regulation of Ras protein signal transduction"/>
    <property type="evidence" value="ECO:0000315"/>
    <property type="project" value="MGI"/>
</dbReference>
<dbReference type="GO" id="GO:0099171">
    <property type="term" value="P:presynaptic modulation of chemical synaptic transmission"/>
    <property type="evidence" value="ECO:0000314"/>
    <property type="project" value="SynGO"/>
</dbReference>
<dbReference type="GO" id="GO:0007265">
    <property type="term" value="P:Ras protein signal transduction"/>
    <property type="evidence" value="ECO:0000315"/>
    <property type="project" value="MGI"/>
</dbReference>
<dbReference type="GO" id="GO:1900452">
    <property type="term" value="P:regulation of long-term synaptic depression"/>
    <property type="evidence" value="ECO:0000315"/>
    <property type="project" value="MGI"/>
</dbReference>
<dbReference type="GO" id="GO:0051966">
    <property type="term" value="P:regulation of synaptic transmission, glutamatergic"/>
    <property type="evidence" value="ECO:0000315"/>
    <property type="project" value="MGI"/>
</dbReference>
<dbReference type="CDD" id="cd20850">
    <property type="entry name" value="C1_DGKiota_rpt1"/>
    <property type="match status" value="1"/>
</dbReference>
<dbReference type="CDD" id="cd20896">
    <property type="entry name" value="C1_DGKiota_rpt2"/>
    <property type="match status" value="1"/>
</dbReference>
<dbReference type="FunFam" id="1.25.40.20:FF:000061">
    <property type="entry name" value="Diacylglycerol kinase"/>
    <property type="match status" value="1"/>
</dbReference>
<dbReference type="FunFam" id="2.60.200.40:FF:000002">
    <property type="entry name" value="Diacylglycerol kinase"/>
    <property type="match status" value="1"/>
</dbReference>
<dbReference type="FunFam" id="3.30.60.20:FF:000035">
    <property type="entry name" value="Diacylglycerol kinase"/>
    <property type="match status" value="1"/>
</dbReference>
<dbReference type="FunFam" id="3.40.50.10330:FF:000002">
    <property type="entry name" value="Diacylglycerol kinase"/>
    <property type="match status" value="1"/>
</dbReference>
<dbReference type="Gene3D" id="2.60.200.40">
    <property type="match status" value="1"/>
</dbReference>
<dbReference type="Gene3D" id="3.30.60.20">
    <property type="match status" value="1"/>
</dbReference>
<dbReference type="Gene3D" id="1.25.40.20">
    <property type="entry name" value="Ankyrin repeat-containing domain"/>
    <property type="match status" value="1"/>
</dbReference>
<dbReference type="Gene3D" id="3.40.50.10330">
    <property type="entry name" value="Probable inorganic polyphosphate/atp-NAD kinase, domain 1"/>
    <property type="match status" value="1"/>
</dbReference>
<dbReference type="InterPro" id="IPR002110">
    <property type="entry name" value="Ankyrin_rpt"/>
</dbReference>
<dbReference type="InterPro" id="IPR036770">
    <property type="entry name" value="Ankyrin_rpt-contain_sf"/>
</dbReference>
<dbReference type="InterPro" id="IPR017438">
    <property type="entry name" value="ATP-NAD_kinase_N"/>
</dbReference>
<dbReference type="InterPro" id="IPR047486">
    <property type="entry name" value="C1_DGKiota_rpt1"/>
</dbReference>
<dbReference type="InterPro" id="IPR047487">
    <property type="entry name" value="C1_DGKiota_rpt2"/>
</dbReference>
<dbReference type="InterPro" id="IPR037607">
    <property type="entry name" value="DGK"/>
</dbReference>
<dbReference type="InterPro" id="IPR056383">
    <property type="entry name" value="DGKI-like_dom"/>
</dbReference>
<dbReference type="InterPro" id="IPR000756">
    <property type="entry name" value="Diacylglycerol_kin_accessory"/>
</dbReference>
<dbReference type="InterPro" id="IPR001206">
    <property type="entry name" value="Diacylglycerol_kinase_cat_dom"/>
</dbReference>
<dbReference type="InterPro" id="IPR016064">
    <property type="entry name" value="NAD/diacylglycerol_kinase_sf"/>
</dbReference>
<dbReference type="InterPro" id="IPR002219">
    <property type="entry name" value="PE/DAG-bd"/>
</dbReference>
<dbReference type="PANTHER" id="PTHR11255">
    <property type="entry name" value="DIACYLGLYCEROL KINASE"/>
    <property type="match status" value="1"/>
</dbReference>
<dbReference type="PANTHER" id="PTHR11255:SF92">
    <property type="entry name" value="DIACYLGLYCEROL KINASE IOTA"/>
    <property type="match status" value="1"/>
</dbReference>
<dbReference type="Pfam" id="PF12796">
    <property type="entry name" value="Ank_2"/>
    <property type="match status" value="1"/>
</dbReference>
<dbReference type="Pfam" id="PF00130">
    <property type="entry name" value="C1_1"/>
    <property type="match status" value="1"/>
</dbReference>
<dbReference type="Pfam" id="PF00609">
    <property type="entry name" value="DAGK_acc"/>
    <property type="match status" value="1"/>
</dbReference>
<dbReference type="Pfam" id="PF00781">
    <property type="entry name" value="DAGK_cat"/>
    <property type="match status" value="1"/>
</dbReference>
<dbReference type="Pfam" id="PF23578">
    <property type="entry name" value="DGKI"/>
    <property type="match status" value="1"/>
</dbReference>
<dbReference type="SMART" id="SM00248">
    <property type="entry name" value="ANK"/>
    <property type="match status" value="2"/>
</dbReference>
<dbReference type="SMART" id="SM00109">
    <property type="entry name" value="C1"/>
    <property type="match status" value="2"/>
</dbReference>
<dbReference type="SMART" id="SM00045">
    <property type="entry name" value="DAGKa"/>
    <property type="match status" value="1"/>
</dbReference>
<dbReference type="SMART" id="SM00046">
    <property type="entry name" value="DAGKc"/>
    <property type="match status" value="1"/>
</dbReference>
<dbReference type="SUPFAM" id="SSF48403">
    <property type="entry name" value="Ankyrin repeat"/>
    <property type="match status" value="1"/>
</dbReference>
<dbReference type="SUPFAM" id="SSF111331">
    <property type="entry name" value="NAD kinase/diacylglycerol kinase-like"/>
    <property type="match status" value="1"/>
</dbReference>
<dbReference type="PROSITE" id="PS50297">
    <property type="entry name" value="ANK_REP_REGION"/>
    <property type="match status" value="1"/>
</dbReference>
<dbReference type="PROSITE" id="PS50088">
    <property type="entry name" value="ANK_REPEAT"/>
    <property type="match status" value="1"/>
</dbReference>
<dbReference type="PROSITE" id="PS50146">
    <property type="entry name" value="DAGK"/>
    <property type="match status" value="1"/>
</dbReference>
<keyword id="KW-0025">Alternative splicing</keyword>
<keyword id="KW-0040">ANK repeat</keyword>
<keyword id="KW-0067">ATP-binding</keyword>
<keyword id="KW-1003">Cell membrane</keyword>
<keyword id="KW-0966">Cell projection</keyword>
<keyword id="KW-0963">Cytoplasm</keyword>
<keyword id="KW-0968">Cytoplasmic vesicle</keyword>
<keyword id="KW-0418">Kinase</keyword>
<keyword id="KW-0443">Lipid metabolism</keyword>
<keyword id="KW-0472">Membrane</keyword>
<keyword id="KW-0547">Nucleotide-binding</keyword>
<keyword id="KW-0539">Nucleus</keyword>
<keyword id="KW-1185">Reference proteome</keyword>
<keyword id="KW-0677">Repeat</keyword>
<keyword id="KW-0770">Synapse</keyword>
<keyword id="KW-0808">Transferase</keyword>
<reference key="1">
    <citation type="journal article" date="2009" name="PLoS Biol.">
        <title>Lineage-specific biology revealed by a finished genome assembly of the mouse.</title>
        <authorList>
            <person name="Church D.M."/>
            <person name="Goodstadt L."/>
            <person name="Hillier L.W."/>
            <person name="Zody M.C."/>
            <person name="Goldstein S."/>
            <person name="She X."/>
            <person name="Bult C.J."/>
            <person name="Agarwala R."/>
            <person name="Cherry J.L."/>
            <person name="DiCuccio M."/>
            <person name="Hlavina W."/>
            <person name="Kapustin Y."/>
            <person name="Meric P."/>
            <person name="Maglott D."/>
            <person name="Birtle Z."/>
            <person name="Marques A.C."/>
            <person name="Graves T."/>
            <person name="Zhou S."/>
            <person name="Teague B."/>
            <person name="Potamousis K."/>
            <person name="Churas C."/>
            <person name="Place M."/>
            <person name="Herschleb J."/>
            <person name="Runnheim R."/>
            <person name="Forrest D."/>
            <person name="Amos-Landgraf J."/>
            <person name="Schwartz D.C."/>
            <person name="Cheng Z."/>
            <person name="Lindblad-Toh K."/>
            <person name="Eichler E.E."/>
            <person name="Ponting C.P."/>
        </authorList>
    </citation>
    <scope>NUCLEOTIDE SEQUENCE [LARGE SCALE GENOMIC DNA]</scope>
    <source>
        <strain>C57BL/6J</strain>
    </source>
</reference>
<reference key="2">
    <citation type="journal article" date="2005" name="Proc. Natl. Acad. Sci. U.S.A.">
        <title>Diacylglycerol kinase iota regulates Ras guanyl-releasing protein 3 and inhibits Rap1 signaling.</title>
        <authorList>
            <person name="Regier D.S."/>
            <person name="Higbee J."/>
            <person name="Lund K.M."/>
            <person name="Sakane F."/>
            <person name="Prescott S.M."/>
            <person name="Topham M.K."/>
        </authorList>
    </citation>
    <scope>FUNCTION</scope>
    <scope>INTERACTION WITH RASGRP3</scope>
    <scope>TISSUE SPECIFICITY</scope>
    <scope>DISRUPTION PHENOTYPE</scope>
</reference>
<reference key="3">
    <citation type="journal article" date="2010" name="Cell">
        <title>A tissue-specific atlas of mouse protein phosphorylation and expression.</title>
        <authorList>
            <person name="Huttlin E.L."/>
            <person name="Jedrychowski M.P."/>
            <person name="Elias J.E."/>
            <person name="Goswami T."/>
            <person name="Rad R."/>
            <person name="Beausoleil S.A."/>
            <person name="Villen J."/>
            <person name="Haas W."/>
            <person name="Sowa M.E."/>
            <person name="Gygi S.P."/>
        </authorList>
    </citation>
    <scope>IDENTIFICATION BY MASS SPECTROMETRY [LARGE SCALE ANALYSIS]</scope>
</reference>
<reference key="4">
    <citation type="journal article" date="2011" name="EMBO J.">
        <title>DGKiota regulates presynaptic release during mGluR-dependent LTD.</title>
        <authorList>
            <person name="Yang J."/>
            <person name="Seo J."/>
            <person name="Nair R."/>
            <person name="Han S."/>
            <person name="Jang S."/>
            <person name="Kim K."/>
            <person name="Han K."/>
            <person name="Paik S.K."/>
            <person name="Choi J."/>
            <person name="Lee S."/>
            <person name="Bae Y.C."/>
            <person name="Topham M.K."/>
            <person name="Prescott S.M."/>
            <person name="Rhee J.S."/>
            <person name="Choi S.Y."/>
            <person name="Kim E."/>
        </authorList>
    </citation>
    <scope>FUNCTION</scope>
    <scope>INTERACTION WITH DLG3</scope>
    <scope>TISSUE SPECIFICITY</scope>
    <scope>DISRUPTION PHENOTYPE</scope>
</reference>
<sequence length="1050" mass="115963">MDAAGRGCHLLPLPAARGPARAPAASSALSPTGLCSGTTSASFAAAGAVAMNPSSSAGEERGATGGSSSSGSGAGSCCLGAEGGADPRGAGAAAAAALEEPAAAGQKEKEEALEEKLRDLTFRKQVSYRKAISRTGLQHLAPAHPLGLPVANGPAKEPRATLDWSENAVNGEHLWLETNVSGDLCYLGEENCQVRFAKSALRRKCAVCKIVVHTACIEQLEKINFRCKPTFREGGSRSPRENFVRHHWVHRRRQEGKCKQCGKGFQQKFSFHSKEIVAISCSWCKQAFHNKVTCFMLHHIEEPCSLGAHAAVIVPPTWIIKVKKPQNSLKASNRKKKRTSFKRKASKRGTEQETKGRPFVIKPISSPLMKPLLVFVNPKSGGNQGTKVLQMFMWYLNPRQVFDLSQEGPKDALEMYRKVPNLRILACGGDGTVGWILSILDELQLSPQPPVGVLPLGTGNDLARTLNWGGGYTDEPVSKILCQVEDGTIVQLDRWNLHVERNPDLPPEELEDGVCKLPLNVFNNYFSLGFDAHVTLEFHESREANPEKFNSRFRNKMFYAGAAFSDFLQRSSRDLSKHVKVVCDGTDLTPKIQDLKFQCIVFLNIPRYCAGTMPWGNPGDHHDFEPQRHDDGYIEVIGFTMASLAALQVGGHGERLHQCREVMLLTYKSIPMQVDGEPCRLAPAMIRISLRNQANMVQKSKRRTSMPLLNDPQSVPDRLRIRVNKISLQDYEGLHYDKDKLREASIPLGILVVRGDCDLETCRMYIDRLQEDLQSVSSGSQRVHYQDQETSFPRALSAQRLSPRWCFLDATSADRFYRIDRSQEHLHFVMEISHDEIFILDPDMVVSQQAGTPPGMPDLVVEQASGLSDWWNPALRKRMLSDSGMITPHYEDSDLKDFSHSRVLQSPVSSEDHAILQAVLTGDLMKLMESYKNGGSLLIQGPGHCSLLHYAAKTGNGDIVKYILDHGPAELLDMADSETGETALHKAACQRNRAVCQLLVDAGASLRQTDSKGKTPQERAQQAGDPDLAAYLESRQNYKIIGHEDLETAV</sequence>
<evidence type="ECO:0000250" key="1">
    <source>
        <dbReference type="UniProtKB" id="F1MAB7"/>
    </source>
</evidence>
<evidence type="ECO:0000250" key="2">
    <source>
        <dbReference type="UniProtKB" id="O75912"/>
    </source>
</evidence>
<evidence type="ECO:0000255" key="3"/>
<evidence type="ECO:0000255" key="4">
    <source>
        <dbReference type="PROSITE-ProRule" id="PRU00783"/>
    </source>
</evidence>
<evidence type="ECO:0000256" key="5">
    <source>
        <dbReference type="SAM" id="MobiDB-lite"/>
    </source>
</evidence>
<evidence type="ECO:0000269" key="6">
    <source>
    </source>
</evidence>
<evidence type="ECO:0000269" key="7">
    <source>
    </source>
</evidence>
<evidence type="ECO:0000303" key="8">
    <source>
    </source>
</evidence>
<evidence type="ECO:0000305" key="9"/>
<evidence type="ECO:0000305" key="10">
    <source>
    </source>
</evidence>
<evidence type="ECO:0000312" key="11">
    <source>
        <dbReference type="MGI" id="MGI:2443430"/>
    </source>
</evidence>
<accession>D3YWQ0</accession>
<accession>D3Z2W1</accession>
<organism>
    <name type="scientific">Mus musculus</name>
    <name type="common">Mouse</name>
    <dbReference type="NCBI Taxonomy" id="10090"/>
    <lineage>
        <taxon>Eukaryota</taxon>
        <taxon>Metazoa</taxon>
        <taxon>Chordata</taxon>
        <taxon>Craniata</taxon>
        <taxon>Vertebrata</taxon>
        <taxon>Euteleostomi</taxon>
        <taxon>Mammalia</taxon>
        <taxon>Eutheria</taxon>
        <taxon>Euarchontoglires</taxon>
        <taxon>Glires</taxon>
        <taxon>Rodentia</taxon>
        <taxon>Myomorpha</taxon>
        <taxon>Muroidea</taxon>
        <taxon>Muridae</taxon>
        <taxon>Murinae</taxon>
        <taxon>Mus</taxon>
        <taxon>Mus</taxon>
    </lineage>
</organism>
<name>DGKI_MOUSE</name>
<gene>
    <name evidence="11" type="primary">Dgki</name>
</gene>
<protein>
    <recommendedName>
        <fullName evidence="8">Diacylglycerol kinase iota</fullName>
        <shortName evidence="10">DAG kinase iota</shortName>
        <ecNumber evidence="2">2.7.1.107</ecNumber>
    </recommendedName>
</protein>
<comment type="function">
    <text evidence="2 6 7">Diacylglycerol kinase that converts diacylglycerol/DAG into phosphatidic acid/phosphatidate/PA and regulates the respective levels of these two bioactive lipids. Thereby, acts as a central switch between the signaling pathways activated by these second messengers with different cellular targets and opposite effects in numerous biological processes. Has probably no preference for any of the diacylglycerols in terms of the acyl chain composition, especially for the acyl chain at the sn-2 position (By similarity). By controlling the diacylglycerol/DAG-mediated activation of RASGRP3, negatively regulates the Rap1 signaling pathway (PubMed:15894621). May play a role in presynaptic diacylglycerol/DAG signaling and control neurotransmitter release during metabotropic glutamate receptor-dependent long-term depression (PubMed:21119615).</text>
</comment>
<comment type="catalytic activity">
    <reaction evidence="2">
        <text>a 1,2-diacyl-sn-glycerol + ATP = a 1,2-diacyl-sn-glycero-3-phosphate + ADP + H(+)</text>
        <dbReference type="Rhea" id="RHEA:10272"/>
        <dbReference type="ChEBI" id="CHEBI:15378"/>
        <dbReference type="ChEBI" id="CHEBI:17815"/>
        <dbReference type="ChEBI" id="CHEBI:30616"/>
        <dbReference type="ChEBI" id="CHEBI:58608"/>
        <dbReference type="ChEBI" id="CHEBI:456216"/>
        <dbReference type="EC" id="2.7.1.107"/>
    </reaction>
    <physiologicalReaction direction="left-to-right" evidence="2">
        <dbReference type="Rhea" id="RHEA:10273"/>
    </physiologicalReaction>
</comment>
<comment type="catalytic activity">
    <reaction evidence="2">
        <text>1,2-di-(9Z-octadecenoyl)-sn-glycerol + ATP = 1,2-di-(9Z-octadecenoyl)-sn-glycero-3-phosphate + ADP + H(+)</text>
        <dbReference type="Rhea" id="RHEA:40327"/>
        <dbReference type="ChEBI" id="CHEBI:15378"/>
        <dbReference type="ChEBI" id="CHEBI:30616"/>
        <dbReference type="ChEBI" id="CHEBI:52333"/>
        <dbReference type="ChEBI" id="CHEBI:74546"/>
        <dbReference type="ChEBI" id="CHEBI:456216"/>
    </reaction>
    <physiologicalReaction direction="left-to-right" evidence="2">
        <dbReference type="Rhea" id="RHEA:40328"/>
    </physiologicalReaction>
</comment>
<comment type="catalytic activity">
    <reaction evidence="2">
        <text>1-octadecanoyl-2-(5Z,8Z,11Z,14Z-eicosatetraenoyl)-sn-glycerol + ATP = 1-octadecanoyl-2-(5Z,8Z,11Z,14Z-eicosatetraenoyl)-sn-glycero-3-phosphate + ADP + H(+)</text>
        <dbReference type="Rhea" id="RHEA:40323"/>
        <dbReference type="ChEBI" id="CHEBI:15378"/>
        <dbReference type="ChEBI" id="CHEBI:30616"/>
        <dbReference type="ChEBI" id="CHEBI:75728"/>
        <dbReference type="ChEBI" id="CHEBI:77091"/>
        <dbReference type="ChEBI" id="CHEBI:456216"/>
    </reaction>
    <physiologicalReaction direction="left-to-right" evidence="2">
        <dbReference type="Rhea" id="RHEA:40324"/>
    </physiologicalReaction>
</comment>
<comment type="catalytic activity">
    <reaction evidence="1">
        <text>1-octadecanoyl-2-(9Z,12Z)-octadecadienoyl-sn-glycerol + ATP = 1-octadecanoyl-2-(9Z,12Z-octadecadienoyl)-sn-glycero-3-phosphate + ADP + H(+)</text>
        <dbReference type="Rhea" id="RHEA:40339"/>
        <dbReference type="ChEBI" id="CHEBI:15378"/>
        <dbReference type="ChEBI" id="CHEBI:30616"/>
        <dbReference type="ChEBI" id="CHEBI:77097"/>
        <dbReference type="ChEBI" id="CHEBI:77098"/>
        <dbReference type="ChEBI" id="CHEBI:456216"/>
    </reaction>
    <physiologicalReaction direction="left-to-right" evidence="1">
        <dbReference type="Rhea" id="RHEA:40340"/>
    </physiologicalReaction>
</comment>
<comment type="pathway">
    <text evidence="2">Lipid metabolism; glycerolipid metabolism.</text>
</comment>
<comment type="subunit">
    <text evidence="1 7 10">Interacts (via PDZ-binding motif) with DLG4; controls the localization of DGKI to the synapse (By similarity). Interacts (via PDZ-binding motif) with DLG1 (By similarity). Interacts (via PDZ-binding motif) with DLG2 (By similarity). Interacts (via PDZ-binding motif) with DLG3 (PubMed:21119615). May interact with RASGRP3; involved in the regulation of RASGRP3 activity (Probable).</text>
</comment>
<comment type="subcellular location">
    <subcellularLocation>
        <location evidence="1">Cell projection</location>
        <location evidence="1">Axon</location>
    </subcellularLocation>
    <subcellularLocation>
        <location evidence="1">Cell projection</location>
        <location evidence="1">Dendrite</location>
    </subcellularLocation>
    <subcellularLocation>
        <location evidence="1">Presynapse</location>
    </subcellularLocation>
    <subcellularLocation>
        <location evidence="1">Postsynapse</location>
    </subcellularLocation>
    <subcellularLocation>
        <location evidence="1">Postsynaptic density</location>
    </subcellularLocation>
    <subcellularLocation>
        <location evidence="1">Synaptic cell membrane</location>
    </subcellularLocation>
    <subcellularLocation>
        <location evidence="1">Cytoplasmic vesicle</location>
        <location evidence="1">Secretory vesicle</location>
        <location evidence="1">Synaptic vesicle membrane</location>
    </subcellularLocation>
    <subcellularLocation>
        <location evidence="2">Cytoplasm</location>
        <location evidence="2">Cytosol</location>
    </subcellularLocation>
    <subcellularLocation>
        <location evidence="2">Nucleus</location>
    </subcellularLocation>
    <text evidence="1 2">Excluded from inhibitory synapses (By similarity). Localization between cytoplasm and nucleus is regulated by protein kinase C (By similarity). Both in the detergent soluble and particulate fractions (By similarity).</text>
</comment>
<comment type="alternative products">
    <event type="alternative splicing"/>
    <isoform>
        <id>D3YWQ0-2</id>
        <name>2</name>
        <sequence type="displayed"/>
    </isoform>
    <isoform>
        <id>D3YWQ0-1</id>
        <name>1</name>
        <sequence type="described" ref="VSP_062486"/>
    </isoform>
</comment>
<comment type="tissue specificity">
    <text evidence="6 7">In brain, expressed in the hippocampus and cerebellum with stronger expression in the Purkinje cell layer (at protein level) (PubMed:21119615). Expressed in kidney (PubMed:15894621).</text>
</comment>
<comment type="disruption phenotype">
    <text evidence="6 7">Homozygous knockout mice lacking Dgki do not display overt phenotype (PubMed:15894621). They are slower to habituation to a novel environment, but have normal levels of locomotor activity, anxiety, and motor coordination (PubMed:21119615). They display a small increase in presynaptic release probability and synapses show a reduction in metabotropic glutamate receptor-dependent long-term depression (PubMed:21119615).</text>
</comment>
<comment type="similarity">
    <text evidence="9">Belongs to the eukaryotic diacylglycerol kinase family.</text>
</comment>
<proteinExistence type="evidence at protein level"/>
<feature type="chain" id="PRO_0000451698" description="Diacylglycerol kinase iota">
    <location>
        <begin position="1"/>
        <end position="1050"/>
    </location>
</feature>
<feature type="domain" description="DAGKc" evidence="4">
    <location>
        <begin position="367"/>
        <end position="502"/>
    </location>
</feature>
<feature type="repeat" description="ANK 1" evidence="3">
    <location>
        <begin position="943"/>
        <end position="972"/>
    </location>
</feature>
<feature type="repeat" description="ANK 2" evidence="3">
    <location>
        <begin position="979"/>
        <end position="1008"/>
    </location>
</feature>
<feature type="region of interest" description="Disordered" evidence="5">
    <location>
        <begin position="53"/>
        <end position="74"/>
    </location>
</feature>
<feature type="region of interest" description="Disordered" evidence="5">
    <location>
        <begin position="92"/>
        <end position="111"/>
    </location>
</feature>
<feature type="region of interest" description="Disordered" evidence="5">
    <location>
        <begin position="328"/>
        <end position="356"/>
    </location>
</feature>
<feature type="short sequence motif" description="PDZ-binding" evidence="1">
    <location>
        <begin position="1048"/>
        <end position="1050"/>
    </location>
</feature>
<feature type="compositionally biased region" description="Low complexity" evidence="5">
    <location>
        <begin position="92"/>
        <end position="105"/>
    </location>
</feature>
<feature type="compositionally biased region" description="Basic residues" evidence="5">
    <location>
        <begin position="332"/>
        <end position="347"/>
    </location>
</feature>
<feature type="splice variant" id="VSP_062486" description="In isoform 1.">
    <original>D</original>
    <variation>DIHQVQAADLRRVSAPPGSFTI</variation>
    <location>
        <position position="711"/>
    </location>
</feature>